<dbReference type="EC" id="2.7.4.22" evidence="1"/>
<dbReference type="EMBL" id="CP000716">
    <property type="protein sequence ID" value="ABR30349.1"/>
    <property type="molecule type" value="Genomic_DNA"/>
</dbReference>
<dbReference type="RefSeq" id="WP_012056710.1">
    <property type="nucleotide sequence ID" value="NC_009616.1"/>
</dbReference>
<dbReference type="SMR" id="A6LK98"/>
<dbReference type="STRING" id="391009.Tmel_0482"/>
<dbReference type="KEGG" id="tme:Tmel_0482"/>
<dbReference type="eggNOG" id="COG0528">
    <property type="taxonomic scope" value="Bacteria"/>
</dbReference>
<dbReference type="HOGENOM" id="CLU_033861_0_0_0"/>
<dbReference type="OrthoDB" id="9807458at2"/>
<dbReference type="UniPathway" id="UPA00159">
    <property type="reaction ID" value="UER00275"/>
</dbReference>
<dbReference type="Proteomes" id="UP000001110">
    <property type="component" value="Chromosome"/>
</dbReference>
<dbReference type="GO" id="GO:0005737">
    <property type="term" value="C:cytoplasm"/>
    <property type="evidence" value="ECO:0007669"/>
    <property type="project" value="UniProtKB-SubCell"/>
</dbReference>
<dbReference type="GO" id="GO:0005524">
    <property type="term" value="F:ATP binding"/>
    <property type="evidence" value="ECO:0007669"/>
    <property type="project" value="UniProtKB-KW"/>
</dbReference>
<dbReference type="GO" id="GO:0033862">
    <property type="term" value="F:UMP kinase activity"/>
    <property type="evidence" value="ECO:0007669"/>
    <property type="project" value="UniProtKB-EC"/>
</dbReference>
<dbReference type="GO" id="GO:0044210">
    <property type="term" value="P:'de novo' CTP biosynthetic process"/>
    <property type="evidence" value="ECO:0007669"/>
    <property type="project" value="UniProtKB-UniRule"/>
</dbReference>
<dbReference type="GO" id="GO:0006225">
    <property type="term" value="P:UDP biosynthetic process"/>
    <property type="evidence" value="ECO:0007669"/>
    <property type="project" value="TreeGrafter"/>
</dbReference>
<dbReference type="CDD" id="cd04254">
    <property type="entry name" value="AAK_UMPK-PyrH-Ec"/>
    <property type="match status" value="1"/>
</dbReference>
<dbReference type="FunFam" id="3.40.1160.10:FF:000001">
    <property type="entry name" value="Uridylate kinase"/>
    <property type="match status" value="1"/>
</dbReference>
<dbReference type="Gene3D" id="3.40.1160.10">
    <property type="entry name" value="Acetylglutamate kinase-like"/>
    <property type="match status" value="1"/>
</dbReference>
<dbReference type="HAMAP" id="MF_01220_B">
    <property type="entry name" value="PyrH_B"/>
    <property type="match status" value="1"/>
</dbReference>
<dbReference type="InterPro" id="IPR036393">
    <property type="entry name" value="AceGlu_kinase-like_sf"/>
</dbReference>
<dbReference type="InterPro" id="IPR001048">
    <property type="entry name" value="Asp/Glu/Uridylate_kinase"/>
</dbReference>
<dbReference type="InterPro" id="IPR011817">
    <property type="entry name" value="Uridylate_kinase"/>
</dbReference>
<dbReference type="InterPro" id="IPR015963">
    <property type="entry name" value="Uridylate_kinase_bac"/>
</dbReference>
<dbReference type="NCBIfam" id="TIGR02075">
    <property type="entry name" value="pyrH_bact"/>
    <property type="match status" value="1"/>
</dbReference>
<dbReference type="PANTHER" id="PTHR42833">
    <property type="entry name" value="URIDYLATE KINASE"/>
    <property type="match status" value="1"/>
</dbReference>
<dbReference type="PANTHER" id="PTHR42833:SF4">
    <property type="entry name" value="URIDYLATE KINASE PUMPKIN, CHLOROPLASTIC"/>
    <property type="match status" value="1"/>
</dbReference>
<dbReference type="Pfam" id="PF00696">
    <property type="entry name" value="AA_kinase"/>
    <property type="match status" value="1"/>
</dbReference>
<dbReference type="PIRSF" id="PIRSF005650">
    <property type="entry name" value="Uridylate_kin"/>
    <property type="match status" value="1"/>
</dbReference>
<dbReference type="SUPFAM" id="SSF53633">
    <property type="entry name" value="Carbamate kinase-like"/>
    <property type="match status" value="1"/>
</dbReference>
<feature type="chain" id="PRO_0000323975" description="Uridylate kinase">
    <location>
        <begin position="1"/>
        <end position="233"/>
    </location>
</feature>
<feature type="binding site" evidence="1">
    <location>
        <begin position="8"/>
        <end position="11"/>
    </location>
    <ligand>
        <name>ATP</name>
        <dbReference type="ChEBI" id="CHEBI:30616"/>
    </ligand>
</feature>
<feature type="binding site" evidence="1">
    <location>
        <position position="51"/>
    </location>
    <ligand>
        <name>ATP</name>
        <dbReference type="ChEBI" id="CHEBI:30616"/>
    </ligand>
</feature>
<feature type="binding site" evidence="1">
    <location>
        <position position="55"/>
    </location>
    <ligand>
        <name>ATP</name>
        <dbReference type="ChEBI" id="CHEBI:30616"/>
    </ligand>
</feature>
<feature type="binding site" evidence="1">
    <location>
        <position position="68"/>
    </location>
    <ligand>
        <name>UMP</name>
        <dbReference type="ChEBI" id="CHEBI:57865"/>
    </ligand>
</feature>
<feature type="binding site" evidence="1">
    <location>
        <begin position="129"/>
        <end position="136"/>
    </location>
    <ligand>
        <name>UMP</name>
        <dbReference type="ChEBI" id="CHEBI:57865"/>
    </ligand>
</feature>
<feature type="binding site" evidence="1">
    <location>
        <position position="156"/>
    </location>
    <ligand>
        <name>ATP</name>
        <dbReference type="ChEBI" id="CHEBI:30616"/>
    </ligand>
</feature>
<feature type="binding site" evidence="1">
    <location>
        <position position="162"/>
    </location>
    <ligand>
        <name>ATP</name>
        <dbReference type="ChEBI" id="CHEBI:30616"/>
    </ligand>
</feature>
<feature type="binding site" evidence="1">
    <location>
        <position position="165"/>
    </location>
    <ligand>
        <name>ATP</name>
        <dbReference type="ChEBI" id="CHEBI:30616"/>
    </ligand>
</feature>
<proteinExistence type="inferred from homology"/>
<accession>A6LK98</accession>
<keyword id="KW-0067">ATP-binding</keyword>
<keyword id="KW-0963">Cytoplasm</keyword>
<keyword id="KW-0418">Kinase</keyword>
<keyword id="KW-0547">Nucleotide-binding</keyword>
<keyword id="KW-0665">Pyrimidine biosynthesis</keyword>
<keyword id="KW-0808">Transferase</keyword>
<sequence>MYKRVLLKLSGEVLSGEGEKGFNHENIIYLVDELKKILEYGTNVGIVIGAGNLFRGREMQELSPTIADQIGMLGTVINALYLKDIFEKNNLRTVVVSQVSSLPSIRPIHYDDINLYFDAGYLVIFAGGTSNPFFTTDTAAALRAVEMKADILIKGTKVDGIYDKDPKKFTDARKFDTLTYDEAIDKGLKIMDTEAFSICKRYDMKILVMDFFKESNLLSAVREENVGTLVVPK</sequence>
<evidence type="ECO:0000255" key="1">
    <source>
        <dbReference type="HAMAP-Rule" id="MF_01220"/>
    </source>
</evidence>
<comment type="function">
    <text evidence="1">Catalyzes the reversible phosphorylation of UMP to UDP.</text>
</comment>
<comment type="catalytic activity">
    <reaction evidence="1">
        <text>UMP + ATP = UDP + ADP</text>
        <dbReference type="Rhea" id="RHEA:24400"/>
        <dbReference type="ChEBI" id="CHEBI:30616"/>
        <dbReference type="ChEBI" id="CHEBI:57865"/>
        <dbReference type="ChEBI" id="CHEBI:58223"/>
        <dbReference type="ChEBI" id="CHEBI:456216"/>
        <dbReference type="EC" id="2.7.4.22"/>
    </reaction>
</comment>
<comment type="activity regulation">
    <text evidence="1">Inhibited by UTP.</text>
</comment>
<comment type="pathway">
    <text evidence="1">Pyrimidine metabolism; CTP biosynthesis via de novo pathway; UDP from UMP (UMPK route): step 1/1.</text>
</comment>
<comment type="subunit">
    <text evidence="1">Homohexamer.</text>
</comment>
<comment type="subcellular location">
    <subcellularLocation>
        <location evidence="1">Cytoplasm</location>
    </subcellularLocation>
</comment>
<comment type="similarity">
    <text evidence="1">Belongs to the UMP kinase family.</text>
</comment>
<organism>
    <name type="scientific">Thermosipho melanesiensis (strain DSM 12029 / CIP 104789 / BI429)</name>
    <dbReference type="NCBI Taxonomy" id="391009"/>
    <lineage>
        <taxon>Bacteria</taxon>
        <taxon>Thermotogati</taxon>
        <taxon>Thermotogota</taxon>
        <taxon>Thermotogae</taxon>
        <taxon>Thermotogales</taxon>
        <taxon>Fervidobacteriaceae</taxon>
        <taxon>Thermosipho</taxon>
    </lineage>
</organism>
<gene>
    <name evidence="1" type="primary">pyrH</name>
    <name type="ordered locus">Tmel_0482</name>
</gene>
<name>PYRH_THEM4</name>
<protein>
    <recommendedName>
        <fullName evidence="1">Uridylate kinase</fullName>
        <shortName evidence="1">UK</shortName>
        <ecNumber evidence="1">2.7.4.22</ecNumber>
    </recommendedName>
    <alternativeName>
        <fullName evidence="1">Uridine monophosphate kinase</fullName>
        <shortName evidence="1">UMP kinase</shortName>
        <shortName evidence="1">UMPK</shortName>
    </alternativeName>
</protein>
<reference key="1">
    <citation type="submission" date="2007-05" db="EMBL/GenBank/DDBJ databases">
        <title>Complete sequence of Thermosipho melanesiensis BI429.</title>
        <authorList>
            <consortium name="US DOE Joint Genome Institute"/>
            <person name="Copeland A."/>
            <person name="Lucas S."/>
            <person name="Lapidus A."/>
            <person name="Barry K."/>
            <person name="Glavina del Rio T."/>
            <person name="Dalin E."/>
            <person name="Tice H."/>
            <person name="Pitluck S."/>
            <person name="Chertkov O."/>
            <person name="Brettin T."/>
            <person name="Bruce D."/>
            <person name="Detter J.C."/>
            <person name="Han C."/>
            <person name="Schmutz J."/>
            <person name="Larimer F."/>
            <person name="Land M."/>
            <person name="Hauser L."/>
            <person name="Kyrpides N."/>
            <person name="Mikhailova N."/>
            <person name="Nelson K."/>
            <person name="Gogarten J.P."/>
            <person name="Noll K."/>
            <person name="Richardson P."/>
        </authorList>
    </citation>
    <scope>NUCLEOTIDE SEQUENCE [LARGE SCALE GENOMIC DNA]</scope>
    <source>
        <strain>DSM 12029 / CIP 104789 / BI429</strain>
    </source>
</reference>